<evidence type="ECO:0000255" key="1">
    <source>
        <dbReference type="HAMAP-Rule" id="MF_00189"/>
    </source>
</evidence>
<feature type="chain" id="PRO_1000118578" description="Inner membrane-spanning protein YciB">
    <location>
        <begin position="1"/>
        <end position="179"/>
    </location>
</feature>
<feature type="transmembrane region" description="Helical" evidence="1">
    <location>
        <begin position="22"/>
        <end position="42"/>
    </location>
</feature>
<feature type="transmembrane region" description="Helical" evidence="1">
    <location>
        <begin position="50"/>
        <end position="70"/>
    </location>
</feature>
<feature type="transmembrane region" description="Helical" evidence="1">
    <location>
        <begin position="76"/>
        <end position="96"/>
    </location>
</feature>
<feature type="transmembrane region" description="Helical" evidence="1">
    <location>
        <begin position="121"/>
        <end position="141"/>
    </location>
</feature>
<feature type="transmembrane region" description="Helical" evidence="1">
    <location>
        <begin position="149"/>
        <end position="169"/>
    </location>
</feature>
<sequence>MKQFLDFLPLVVFFAFYKIYDIYAATAALIVATAIVLIYSWVRFRKVEKMALITFVLVVVFGGLTLFFHNDEFIKWKVTVIYALFAGALLVSQWVMKKPLIQRMLGKELTLPQSVWSKLNLAWAVFFILCGLANIYIAFWLPQNIWVNFKVFGLTALTLIFTLLSGIYIYRHMPQEDKS</sequence>
<accession>B7ML07</accession>
<reference key="1">
    <citation type="journal article" date="2009" name="PLoS Genet.">
        <title>Organised genome dynamics in the Escherichia coli species results in highly diverse adaptive paths.</title>
        <authorList>
            <person name="Touchon M."/>
            <person name="Hoede C."/>
            <person name="Tenaillon O."/>
            <person name="Barbe V."/>
            <person name="Baeriswyl S."/>
            <person name="Bidet P."/>
            <person name="Bingen E."/>
            <person name="Bonacorsi S."/>
            <person name="Bouchier C."/>
            <person name="Bouvet O."/>
            <person name="Calteau A."/>
            <person name="Chiapello H."/>
            <person name="Clermont O."/>
            <person name="Cruveiller S."/>
            <person name="Danchin A."/>
            <person name="Diard M."/>
            <person name="Dossat C."/>
            <person name="Karoui M.E."/>
            <person name="Frapy E."/>
            <person name="Garry L."/>
            <person name="Ghigo J.M."/>
            <person name="Gilles A.M."/>
            <person name="Johnson J."/>
            <person name="Le Bouguenec C."/>
            <person name="Lescat M."/>
            <person name="Mangenot S."/>
            <person name="Martinez-Jehanne V."/>
            <person name="Matic I."/>
            <person name="Nassif X."/>
            <person name="Oztas S."/>
            <person name="Petit M.A."/>
            <person name="Pichon C."/>
            <person name="Rouy Z."/>
            <person name="Ruf C.S."/>
            <person name="Schneider D."/>
            <person name="Tourret J."/>
            <person name="Vacherie B."/>
            <person name="Vallenet D."/>
            <person name="Medigue C."/>
            <person name="Rocha E.P.C."/>
            <person name="Denamur E."/>
        </authorList>
    </citation>
    <scope>NUCLEOTIDE SEQUENCE [LARGE SCALE GENOMIC DNA]</scope>
    <source>
        <strain>S88 / ExPEC</strain>
    </source>
</reference>
<comment type="function">
    <text evidence="1">Plays a role in cell envelope biogenesis, maintenance of cell envelope integrity and membrane homeostasis.</text>
</comment>
<comment type="subcellular location">
    <subcellularLocation>
        <location evidence="1">Cell inner membrane</location>
        <topology evidence="1">Multi-pass membrane protein</topology>
    </subcellularLocation>
</comment>
<comment type="similarity">
    <text evidence="1">Belongs to the YciB family.</text>
</comment>
<proteinExistence type="inferred from homology"/>
<keyword id="KW-0997">Cell inner membrane</keyword>
<keyword id="KW-1003">Cell membrane</keyword>
<keyword id="KW-0472">Membrane</keyword>
<keyword id="KW-1185">Reference proteome</keyword>
<keyword id="KW-0812">Transmembrane</keyword>
<keyword id="KW-1133">Transmembrane helix</keyword>
<organism>
    <name type="scientific">Escherichia coli O45:K1 (strain S88 / ExPEC)</name>
    <dbReference type="NCBI Taxonomy" id="585035"/>
    <lineage>
        <taxon>Bacteria</taxon>
        <taxon>Pseudomonadati</taxon>
        <taxon>Pseudomonadota</taxon>
        <taxon>Gammaproteobacteria</taxon>
        <taxon>Enterobacterales</taxon>
        <taxon>Enterobacteriaceae</taxon>
        <taxon>Escherichia</taxon>
    </lineage>
</organism>
<protein>
    <recommendedName>
        <fullName evidence="1">Inner membrane-spanning protein YciB</fullName>
    </recommendedName>
</protein>
<gene>
    <name evidence="1" type="primary">yciB</name>
    <name type="ordered locus">ECS88_1324</name>
</gene>
<dbReference type="EMBL" id="CU928161">
    <property type="protein sequence ID" value="CAR02649.1"/>
    <property type="molecule type" value="Genomic_DNA"/>
</dbReference>
<dbReference type="RefSeq" id="WP_000808672.1">
    <property type="nucleotide sequence ID" value="NC_011742.1"/>
</dbReference>
<dbReference type="KEGG" id="ecz:ECS88_1324"/>
<dbReference type="HOGENOM" id="CLU_089554_2_0_6"/>
<dbReference type="Proteomes" id="UP000000747">
    <property type="component" value="Chromosome"/>
</dbReference>
<dbReference type="GO" id="GO:0005886">
    <property type="term" value="C:plasma membrane"/>
    <property type="evidence" value="ECO:0007669"/>
    <property type="project" value="UniProtKB-SubCell"/>
</dbReference>
<dbReference type="HAMAP" id="MF_00189">
    <property type="entry name" value="YciB"/>
    <property type="match status" value="1"/>
</dbReference>
<dbReference type="InterPro" id="IPR006008">
    <property type="entry name" value="YciB"/>
</dbReference>
<dbReference type="NCBIfam" id="TIGR00997">
    <property type="entry name" value="ispZ"/>
    <property type="match status" value="1"/>
</dbReference>
<dbReference type="NCBIfam" id="NF001324">
    <property type="entry name" value="PRK00259.1-2"/>
    <property type="match status" value="1"/>
</dbReference>
<dbReference type="NCBIfam" id="NF001325">
    <property type="entry name" value="PRK00259.1-3"/>
    <property type="match status" value="1"/>
</dbReference>
<dbReference type="NCBIfam" id="NF001326">
    <property type="entry name" value="PRK00259.1-4"/>
    <property type="match status" value="1"/>
</dbReference>
<dbReference type="PANTHER" id="PTHR36917:SF1">
    <property type="entry name" value="INNER MEMBRANE-SPANNING PROTEIN YCIB"/>
    <property type="match status" value="1"/>
</dbReference>
<dbReference type="PANTHER" id="PTHR36917">
    <property type="entry name" value="INTRACELLULAR SEPTATION PROTEIN A-RELATED"/>
    <property type="match status" value="1"/>
</dbReference>
<dbReference type="Pfam" id="PF04279">
    <property type="entry name" value="IspA"/>
    <property type="match status" value="1"/>
</dbReference>
<name>YCIB_ECO45</name>